<accession>B0SSV1</accession>
<sequence length="594" mass="68753">MKANQLLKNLVLTELESAVSSYLTKQKIDLPLTEFKIRIEYSRDEKFGDYSSPFALENKNILKLNPKEIAEGVLSEIKNETLFEFVTFSPPGFINFRIRSQFLIQYTNQVMSPMVTFAKTDEKQSILLEFVSANPTGPMNIVSARSAAYGDALANLLLSLGHTVKREFYVNDYGNQVYLLGVAVLLRIFEEKGEKISFQEDESKESVFTLIEKRILPKESYRGEYIRDIAKEVLSNKTKSIQVEEWIQNKNWDECIHDLSKYAVEYNLSRQKEDLKLFGVHFDQFFSERSLHEAGDVENVPTLLKKEDVSTIDGKLHFLSTQYGDDKDRVIRREDGRPTYLMADIAYHFDKYKRGFTKLIDIWGPDHYGYIARLKGAVLSFGKSNDSFLILIAQQVNLIENKEKVKMSKRLGIFQTMRDLLSYLGKNGKDVGRYFFLMRSSDAPLDFDLDLAKDESDKNPVFYIQYAHARICSIFRELQISIADWSIPKVVSGDCFQSEERLRLLFWVARFQEEVYDTATNLEPHRLTNYLQSLSKAFTKFYSHKDNRIKEKQGEEREQLLFLILFTKRAIASGLELLGISSPEKMSKEDESNT</sequence>
<dbReference type="EC" id="6.1.1.19" evidence="1"/>
<dbReference type="EMBL" id="CP000786">
    <property type="protein sequence ID" value="ABZ98191.1"/>
    <property type="molecule type" value="Genomic_DNA"/>
</dbReference>
<dbReference type="RefSeq" id="WP_012389061.1">
    <property type="nucleotide sequence ID" value="NC_010602.1"/>
</dbReference>
<dbReference type="SMR" id="B0SSV1"/>
<dbReference type="STRING" id="456481.LEPBI_I2089"/>
<dbReference type="KEGG" id="lbi:LEPBI_I2089"/>
<dbReference type="HOGENOM" id="CLU_006406_0_1_12"/>
<dbReference type="OrthoDB" id="9805987at2"/>
<dbReference type="BioCyc" id="LBIF456481:LEPBI_RS10320-MONOMER"/>
<dbReference type="Proteomes" id="UP000001847">
    <property type="component" value="Chromosome I"/>
</dbReference>
<dbReference type="GO" id="GO:0005737">
    <property type="term" value="C:cytoplasm"/>
    <property type="evidence" value="ECO:0007669"/>
    <property type="project" value="UniProtKB-SubCell"/>
</dbReference>
<dbReference type="GO" id="GO:0004814">
    <property type="term" value="F:arginine-tRNA ligase activity"/>
    <property type="evidence" value="ECO:0007669"/>
    <property type="project" value="UniProtKB-UniRule"/>
</dbReference>
<dbReference type="GO" id="GO:0005524">
    <property type="term" value="F:ATP binding"/>
    <property type="evidence" value="ECO:0007669"/>
    <property type="project" value="UniProtKB-UniRule"/>
</dbReference>
<dbReference type="GO" id="GO:0006420">
    <property type="term" value="P:arginyl-tRNA aminoacylation"/>
    <property type="evidence" value="ECO:0007669"/>
    <property type="project" value="UniProtKB-UniRule"/>
</dbReference>
<dbReference type="CDD" id="cd00671">
    <property type="entry name" value="ArgRS_core"/>
    <property type="match status" value="1"/>
</dbReference>
<dbReference type="FunFam" id="1.10.730.10:FF:000008">
    <property type="entry name" value="Arginine--tRNA ligase"/>
    <property type="match status" value="1"/>
</dbReference>
<dbReference type="FunFam" id="3.40.50.620:FF:000062">
    <property type="entry name" value="Arginine--tRNA ligase"/>
    <property type="match status" value="1"/>
</dbReference>
<dbReference type="Gene3D" id="3.30.1360.70">
    <property type="entry name" value="Arginyl tRNA synthetase N-terminal domain"/>
    <property type="match status" value="1"/>
</dbReference>
<dbReference type="Gene3D" id="3.40.50.620">
    <property type="entry name" value="HUPs"/>
    <property type="match status" value="1"/>
</dbReference>
<dbReference type="Gene3D" id="1.10.730.10">
    <property type="entry name" value="Isoleucyl-tRNA Synthetase, Domain 1"/>
    <property type="match status" value="1"/>
</dbReference>
<dbReference type="HAMAP" id="MF_00123">
    <property type="entry name" value="Arg_tRNA_synth"/>
    <property type="match status" value="1"/>
</dbReference>
<dbReference type="InterPro" id="IPR001278">
    <property type="entry name" value="Arg-tRNA-ligase"/>
</dbReference>
<dbReference type="InterPro" id="IPR005148">
    <property type="entry name" value="Arg-tRNA-synth_N"/>
</dbReference>
<dbReference type="InterPro" id="IPR036695">
    <property type="entry name" value="Arg-tRNA-synth_N_sf"/>
</dbReference>
<dbReference type="InterPro" id="IPR035684">
    <property type="entry name" value="ArgRS_core"/>
</dbReference>
<dbReference type="InterPro" id="IPR008909">
    <property type="entry name" value="DALR_anticod-bd"/>
</dbReference>
<dbReference type="InterPro" id="IPR014729">
    <property type="entry name" value="Rossmann-like_a/b/a_fold"/>
</dbReference>
<dbReference type="InterPro" id="IPR009080">
    <property type="entry name" value="tRNAsynth_Ia_anticodon-bd"/>
</dbReference>
<dbReference type="NCBIfam" id="TIGR00456">
    <property type="entry name" value="argS"/>
    <property type="match status" value="1"/>
</dbReference>
<dbReference type="PANTHER" id="PTHR11956:SF5">
    <property type="entry name" value="ARGININE--TRNA LIGASE, CYTOPLASMIC"/>
    <property type="match status" value="1"/>
</dbReference>
<dbReference type="PANTHER" id="PTHR11956">
    <property type="entry name" value="ARGINYL-TRNA SYNTHETASE"/>
    <property type="match status" value="1"/>
</dbReference>
<dbReference type="Pfam" id="PF03485">
    <property type="entry name" value="Arg_tRNA_synt_N"/>
    <property type="match status" value="1"/>
</dbReference>
<dbReference type="Pfam" id="PF05746">
    <property type="entry name" value="DALR_1"/>
    <property type="match status" value="1"/>
</dbReference>
<dbReference type="Pfam" id="PF00750">
    <property type="entry name" value="tRNA-synt_1d"/>
    <property type="match status" value="1"/>
</dbReference>
<dbReference type="PRINTS" id="PR01038">
    <property type="entry name" value="TRNASYNTHARG"/>
</dbReference>
<dbReference type="SMART" id="SM01016">
    <property type="entry name" value="Arg_tRNA_synt_N"/>
    <property type="match status" value="1"/>
</dbReference>
<dbReference type="SMART" id="SM00836">
    <property type="entry name" value="DALR_1"/>
    <property type="match status" value="1"/>
</dbReference>
<dbReference type="SUPFAM" id="SSF47323">
    <property type="entry name" value="Anticodon-binding domain of a subclass of class I aminoacyl-tRNA synthetases"/>
    <property type="match status" value="1"/>
</dbReference>
<dbReference type="SUPFAM" id="SSF55190">
    <property type="entry name" value="Arginyl-tRNA synthetase (ArgRS), N-terminal 'additional' domain"/>
    <property type="match status" value="1"/>
</dbReference>
<dbReference type="SUPFAM" id="SSF52374">
    <property type="entry name" value="Nucleotidylyl transferase"/>
    <property type="match status" value="1"/>
</dbReference>
<protein>
    <recommendedName>
        <fullName evidence="1">Arginine--tRNA ligase</fullName>
        <ecNumber evidence="1">6.1.1.19</ecNumber>
    </recommendedName>
    <alternativeName>
        <fullName evidence="1">Arginyl-tRNA synthetase</fullName>
        <shortName evidence="1">ArgRS</shortName>
    </alternativeName>
</protein>
<comment type="catalytic activity">
    <reaction evidence="1">
        <text>tRNA(Arg) + L-arginine + ATP = L-arginyl-tRNA(Arg) + AMP + diphosphate</text>
        <dbReference type="Rhea" id="RHEA:20301"/>
        <dbReference type="Rhea" id="RHEA-COMP:9658"/>
        <dbReference type="Rhea" id="RHEA-COMP:9673"/>
        <dbReference type="ChEBI" id="CHEBI:30616"/>
        <dbReference type="ChEBI" id="CHEBI:32682"/>
        <dbReference type="ChEBI" id="CHEBI:33019"/>
        <dbReference type="ChEBI" id="CHEBI:78442"/>
        <dbReference type="ChEBI" id="CHEBI:78513"/>
        <dbReference type="ChEBI" id="CHEBI:456215"/>
        <dbReference type="EC" id="6.1.1.19"/>
    </reaction>
</comment>
<comment type="subunit">
    <text evidence="1">Monomer.</text>
</comment>
<comment type="subcellular location">
    <subcellularLocation>
        <location evidence="1">Cytoplasm</location>
    </subcellularLocation>
</comment>
<comment type="similarity">
    <text evidence="1">Belongs to the class-I aminoacyl-tRNA synthetase family.</text>
</comment>
<keyword id="KW-0030">Aminoacyl-tRNA synthetase</keyword>
<keyword id="KW-0067">ATP-binding</keyword>
<keyword id="KW-0963">Cytoplasm</keyword>
<keyword id="KW-0436">Ligase</keyword>
<keyword id="KW-0547">Nucleotide-binding</keyword>
<keyword id="KW-0648">Protein biosynthesis</keyword>
<keyword id="KW-1185">Reference proteome</keyword>
<feature type="chain" id="PRO_1000198915" description="Arginine--tRNA ligase">
    <location>
        <begin position="1"/>
        <end position="594"/>
    </location>
</feature>
<feature type="short sequence motif" description="'HIGH' region">
    <location>
        <begin position="133"/>
        <end position="143"/>
    </location>
</feature>
<reference key="1">
    <citation type="journal article" date="2008" name="PLoS ONE">
        <title>Genome sequence of the saprophyte Leptospira biflexa provides insights into the evolution of Leptospira and the pathogenesis of leptospirosis.</title>
        <authorList>
            <person name="Picardeau M."/>
            <person name="Bulach D.M."/>
            <person name="Bouchier C."/>
            <person name="Zuerner R.L."/>
            <person name="Zidane N."/>
            <person name="Wilson P.J."/>
            <person name="Creno S."/>
            <person name="Kuczek E.S."/>
            <person name="Bommezzadri S."/>
            <person name="Davis J.C."/>
            <person name="McGrath A."/>
            <person name="Johnson M.J."/>
            <person name="Boursaux-Eude C."/>
            <person name="Seemann T."/>
            <person name="Rouy Z."/>
            <person name="Coppel R.L."/>
            <person name="Rood J.I."/>
            <person name="Lajus A."/>
            <person name="Davies J.K."/>
            <person name="Medigue C."/>
            <person name="Adler B."/>
        </authorList>
    </citation>
    <scope>NUCLEOTIDE SEQUENCE [LARGE SCALE GENOMIC DNA]</scope>
    <source>
        <strain>Patoc 1 / ATCC 23582 / Paris</strain>
    </source>
</reference>
<gene>
    <name evidence="1" type="primary">argS</name>
    <name type="ordered locus">LEPBI_I2089</name>
</gene>
<organism>
    <name type="scientific">Leptospira biflexa serovar Patoc (strain Patoc 1 / ATCC 23582 / Paris)</name>
    <dbReference type="NCBI Taxonomy" id="456481"/>
    <lineage>
        <taxon>Bacteria</taxon>
        <taxon>Pseudomonadati</taxon>
        <taxon>Spirochaetota</taxon>
        <taxon>Spirochaetia</taxon>
        <taxon>Leptospirales</taxon>
        <taxon>Leptospiraceae</taxon>
        <taxon>Leptospira</taxon>
    </lineage>
</organism>
<proteinExistence type="inferred from homology"/>
<name>SYR_LEPBP</name>
<evidence type="ECO:0000255" key="1">
    <source>
        <dbReference type="HAMAP-Rule" id="MF_00123"/>
    </source>
</evidence>